<sequence length="11" mass="1315">CCTPFYFCCNN</sequence>
<reference key="1">
    <citation type="journal article" date="2019" name="Protein Pept. Lett.">
        <title>Proteome based de novo sequencing of novel conotoxins from marine molluscivorous cone snail Conus amadis and neurological activities of its natural venom in zebrafish model.</title>
        <authorList>
            <person name="Rajesh R.P."/>
            <person name="Franklin J.B."/>
            <person name="Badsha I."/>
            <person name="Arjun P."/>
            <person name="Jain R.P."/>
            <person name="Vignesh M.S."/>
            <person name="Kannan R.R."/>
        </authorList>
    </citation>
    <scope>PROTEIN SEQUENCE</scope>
    <scope>SUBCELLULAR LOCATION</scope>
    <scope>AMIDATION AT ASN-11</scope>
    <scope>MASS SPECTROMETRY</scope>
    <source>
        <tissue>Venom</tissue>
    </source>
</reference>
<evidence type="ECO:0000269" key="1">
    <source>
    </source>
</evidence>
<evidence type="ECO:0000303" key="2">
    <source>
    </source>
</evidence>
<evidence type="ECO:0000305" key="3"/>
<evidence type="ECO:0000305" key="4">
    <source>
    </source>
</evidence>
<accession>P0DUU2</accession>
<name>T1309_CONAA</name>
<comment type="function">
    <text evidence="3">Probable toxin that inhibits ion channels.</text>
</comment>
<comment type="subcellular location">
    <subcellularLocation>
        <location evidence="1">Secreted</location>
    </subcellularLocation>
</comment>
<comment type="tissue specificity">
    <text evidence="4">Expressed by the venom duct.</text>
</comment>
<comment type="domain">
    <text evidence="3">The cysteine framework is V (CC-CC).</text>
</comment>
<comment type="PTM">
    <text evidence="3">Contains 2 disulfide bonds that can be either 'C1-C3, C2-C4' or 'C1-C4, C2-C3', since these disulfide connectivities have been observed for conotoxins with cysteine framework V (for examples, see AC P0DQQ7 and AC P81755).</text>
</comment>
<comment type="mass spectrometry" mass="1309.5" method="MALDI" evidence="1"/>
<dbReference type="GO" id="GO:0005576">
    <property type="term" value="C:extracellular region"/>
    <property type="evidence" value="ECO:0007669"/>
    <property type="project" value="UniProtKB-SubCell"/>
</dbReference>
<dbReference type="GO" id="GO:0099106">
    <property type="term" value="F:ion channel regulator activity"/>
    <property type="evidence" value="ECO:0007669"/>
    <property type="project" value="UniProtKB-KW"/>
</dbReference>
<dbReference type="GO" id="GO:0090729">
    <property type="term" value="F:toxin activity"/>
    <property type="evidence" value="ECO:0007669"/>
    <property type="project" value="UniProtKB-KW"/>
</dbReference>
<proteinExistence type="evidence at protein level"/>
<feature type="peptide" id="PRO_0000453581" description="Conotoxin Ama1309" evidence="1">
    <location>
        <begin position="1"/>
        <end position="11"/>
    </location>
</feature>
<feature type="modified residue" description="Asparagine amide" evidence="1">
    <location>
        <position position="11"/>
    </location>
</feature>
<protein>
    <recommendedName>
        <fullName evidence="2">Conotoxin Ama1309</fullName>
    </recommendedName>
</protein>
<keyword id="KW-0027">Amidation</keyword>
<keyword id="KW-0903">Direct protein sequencing</keyword>
<keyword id="KW-1015">Disulfide bond</keyword>
<keyword id="KW-0872">Ion channel impairing toxin</keyword>
<keyword id="KW-0964">Secreted</keyword>
<keyword id="KW-0800">Toxin</keyword>
<organism>
    <name type="scientific">Conus amadis</name>
    <name type="common">Amadis cone</name>
    <dbReference type="NCBI Taxonomy" id="198732"/>
    <lineage>
        <taxon>Eukaryota</taxon>
        <taxon>Metazoa</taxon>
        <taxon>Spiralia</taxon>
        <taxon>Lophotrochozoa</taxon>
        <taxon>Mollusca</taxon>
        <taxon>Gastropoda</taxon>
        <taxon>Caenogastropoda</taxon>
        <taxon>Neogastropoda</taxon>
        <taxon>Conoidea</taxon>
        <taxon>Conidae</taxon>
        <taxon>Conus</taxon>
        <taxon>Leptoconus</taxon>
    </lineage>
</organism>